<comment type="function">
    <text evidence="1">Catalyzes the removal of terminal sialic acid residues from viral and cellular glycoconjugates. Cleaves off the terminal sialic acids on the glycosylated HA during virus budding to facilitate virus release. Additionally helps virus spread through the circulation by further removing sialic acids from the cell surface. These cleavages prevent self-aggregation and ensure the efficient spread of the progeny virus from cell to cell. Otherwise, infection would be limited to one round of replication. Described as a receptor-destroying enzyme because it cleaves a terminal sialic acid from the cellular receptors. May facilitate viral invasion of the upper airways by cleaving the sialic acid moieties on the mucin of the airway epithelial cells. Likely to plays a role in the budding process through its association with lipid rafts during intracellular transport. May additionally display a raft-association independent effect on budding. Plays a role in the determination of host range restriction on replication and virulence. Sialidase activity in late endosome/lysosome traffic seems to enhance virus replication.</text>
</comment>
<comment type="catalytic activity">
    <reaction evidence="1">
        <text>Hydrolysis of alpha-(2-&gt;3)-, alpha-(2-&gt;6)-, alpha-(2-&gt;8)- glycosidic linkages of terminal sialic acid residues in oligosaccharides, glycoproteins, glycolipids, colominic acid and synthetic substrates.</text>
        <dbReference type="EC" id="3.2.1.18"/>
    </reaction>
</comment>
<comment type="cofactor">
    <cofactor evidence="1">
        <name>Ca(2+)</name>
        <dbReference type="ChEBI" id="CHEBI:29108"/>
    </cofactor>
</comment>
<comment type="activity regulation">
    <text evidence="1">Inhibited by the neuraminidase inhibitors zanamivir (Relenza) and oseltamivir (Tamiflu). These drugs interfere with the release of progeny virus from infected cells and are effective against all influenza strains. Resistance to neuraminidase inhibitors is quite rare.</text>
</comment>
<comment type="subunit">
    <text evidence="1">Homotetramer.</text>
</comment>
<comment type="subcellular location">
    <subcellularLocation>
        <location evidence="1">Virion membrane</location>
    </subcellularLocation>
    <subcellularLocation>
        <location evidence="1">Host apical cell membrane</location>
        <topology evidence="1">Single-pass type II membrane protein</topology>
    </subcellularLocation>
    <text evidence="1">Preferentially accumulates at the apical plasma membrane in infected polarized epithelial cells, which is the virus assembly site. Uses lipid rafts for cell surface transport and apical sorting. In the virion, forms a mushroom-shaped spike on the surface of the membrane.</text>
</comment>
<comment type="domain">
    <text evidence="1">Intact N-terminus is essential for virion morphogenesis. Possesses two apical sorting signals, one in the ectodomain, which is likely to be a glycan, and the other in the transmembrane domain. The transmembrane domain also plays a role in lipid raft association.</text>
</comment>
<comment type="PTM">
    <text evidence="1">N-glycosylated.</text>
</comment>
<comment type="miscellaneous">
    <text>The influenza A genome consist of 8 RNA segments. Genetic variation of hemagglutinin and/or neuraminidase genes results in the emergence of new influenza strains. The mechanism of variation can be the result of point mutations or the result of genetic reassortment between segments of two different strains.</text>
</comment>
<comment type="similarity">
    <text evidence="1">Belongs to the glycosyl hydrolase 34 family.</text>
</comment>
<protein>
    <recommendedName>
        <fullName evidence="1">Neuraminidase</fullName>
        <ecNumber evidence="1">3.2.1.18</ecNumber>
    </recommendedName>
</protein>
<gene>
    <name evidence="1" type="primary">NA</name>
</gene>
<proteinExistence type="inferred from homology"/>
<organism>
    <name type="scientific">Influenza A virus (strain A/Equine/New Market/1979 H3N8)</name>
    <dbReference type="NCBI Taxonomy" id="387226"/>
    <lineage>
        <taxon>Viruses</taxon>
        <taxon>Riboviria</taxon>
        <taxon>Orthornavirae</taxon>
        <taxon>Negarnaviricota</taxon>
        <taxon>Polyploviricotina</taxon>
        <taxon>Insthoviricetes</taxon>
        <taxon>Articulavirales</taxon>
        <taxon>Orthomyxoviridae</taxon>
        <taxon>Alphainfluenzavirus</taxon>
        <taxon>Alphainfluenzavirus influenzae</taxon>
        <taxon>Influenza A virus</taxon>
    </lineage>
</organism>
<reference key="1">
    <citation type="journal article" date="1993" name="Virology">
        <title>Phylogenetic analysis of the N8 neuraminidase gene of influenza A viruses.</title>
        <authorList>
            <person name="Saito T."/>
            <person name="Kawaoka Y."/>
            <person name="Webster R.G."/>
        </authorList>
    </citation>
    <scope>NUCLEOTIDE SEQUENCE [GENOMIC RNA]</scope>
</reference>
<reference key="2">
    <citation type="journal article" date="2004" name="Virus Res.">
        <title>Assembly and budding of influenza virus.</title>
        <authorList>
            <person name="Nayak D.P."/>
            <person name="Hui E.K."/>
            <person name="Barman S."/>
        </authorList>
    </citation>
    <scope>REVIEW</scope>
</reference>
<reference key="3">
    <citation type="journal article" date="2005" name="N. Engl. J. Med.">
        <title>Neuraminidase inhibitors for influenza.</title>
        <authorList>
            <person name="Moscona A."/>
        </authorList>
    </citation>
    <scope>REVIEW</scope>
</reference>
<reference key="4">
    <citation type="journal article" date="2005" name="Biol. Pharm. Bull.">
        <title>Sialobiology of influenza: molecular mechanism of host range variation of influenza viruses.</title>
        <authorList>
            <person name="Suzuki Y."/>
        </authorList>
    </citation>
    <scope>REVIEW</scope>
</reference>
<organismHost>
    <name type="scientific">Aves</name>
    <dbReference type="NCBI Taxonomy" id="8782"/>
</organismHost>
<organismHost>
    <name type="scientific">Equus caballus</name>
    <name type="common">Horse</name>
    <dbReference type="NCBI Taxonomy" id="9796"/>
</organismHost>
<dbReference type="EC" id="3.2.1.18" evidence="1"/>
<dbReference type="EMBL" id="L06581">
    <property type="protein sequence ID" value="AAA43427.1"/>
    <property type="molecule type" value="Genomic_RNA"/>
</dbReference>
<dbReference type="SMR" id="Q07580"/>
<dbReference type="CAZy" id="GH34">
    <property type="family name" value="Glycoside Hydrolase Family 34"/>
</dbReference>
<dbReference type="GlyCosmos" id="Q07580">
    <property type="glycosylation" value="7 sites, No reported glycans"/>
</dbReference>
<dbReference type="GO" id="GO:0020002">
    <property type="term" value="C:host cell plasma membrane"/>
    <property type="evidence" value="ECO:0007669"/>
    <property type="project" value="UniProtKB-SubCell"/>
</dbReference>
<dbReference type="GO" id="GO:0016020">
    <property type="term" value="C:membrane"/>
    <property type="evidence" value="ECO:0007669"/>
    <property type="project" value="UniProtKB-UniRule"/>
</dbReference>
<dbReference type="GO" id="GO:0055036">
    <property type="term" value="C:virion membrane"/>
    <property type="evidence" value="ECO:0007669"/>
    <property type="project" value="UniProtKB-SubCell"/>
</dbReference>
<dbReference type="GO" id="GO:0004308">
    <property type="term" value="F:exo-alpha-sialidase activity"/>
    <property type="evidence" value="ECO:0007669"/>
    <property type="project" value="UniProtKB-UniRule"/>
</dbReference>
<dbReference type="GO" id="GO:0046872">
    <property type="term" value="F:metal ion binding"/>
    <property type="evidence" value="ECO:0007669"/>
    <property type="project" value="UniProtKB-UniRule"/>
</dbReference>
<dbReference type="GO" id="GO:0005975">
    <property type="term" value="P:carbohydrate metabolic process"/>
    <property type="evidence" value="ECO:0007669"/>
    <property type="project" value="InterPro"/>
</dbReference>
<dbReference type="GO" id="GO:0046761">
    <property type="term" value="P:viral budding from plasma membrane"/>
    <property type="evidence" value="ECO:0007669"/>
    <property type="project" value="UniProtKB-UniRule"/>
</dbReference>
<dbReference type="Gene3D" id="2.120.10.10">
    <property type="match status" value="1"/>
</dbReference>
<dbReference type="HAMAP" id="MF_04071">
    <property type="entry name" value="INFV_NRAM"/>
    <property type="match status" value="1"/>
</dbReference>
<dbReference type="InterPro" id="IPR001860">
    <property type="entry name" value="Glyco_hydro_34"/>
</dbReference>
<dbReference type="InterPro" id="IPR036278">
    <property type="entry name" value="Sialidase_sf"/>
</dbReference>
<dbReference type="Pfam" id="PF00064">
    <property type="entry name" value="Neur"/>
    <property type="match status" value="1"/>
</dbReference>
<dbReference type="SUPFAM" id="SSF50939">
    <property type="entry name" value="Sialidases"/>
    <property type="match status" value="1"/>
</dbReference>
<name>NRAM_I79A6</name>
<keyword id="KW-0106">Calcium</keyword>
<keyword id="KW-1015">Disulfide bond</keyword>
<keyword id="KW-0325">Glycoprotein</keyword>
<keyword id="KW-0326">Glycosidase</keyword>
<keyword id="KW-1032">Host cell membrane</keyword>
<keyword id="KW-1043">Host membrane</keyword>
<keyword id="KW-0378">Hydrolase</keyword>
<keyword id="KW-0472">Membrane</keyword>
<keyword id="KW-0479">Metal-binding</keyword>
<keyword id="KW-0735">Signal-anchor</keyword>
<keyword id="KW-0812">Transmembrane</keyword>
<keyword id="KW-1133">Transmembrane helix</keyword>
<keyword id="KW-0946">Virion</keyword>
<feature type="chain" id="PRO_0000078699" description="Neuraminidase">
    <location>
        <begin position="1"/>
        <end position="470"/>
    </location>
</feature>
<feature type="topological domain" description="Intravirion" evidence="1">
    <location>
        <begin position="1"/>
        <end position="14"/>
    </location>
</feature>
<feature type="transmembrane region" description="Helical" evidence="1">
    <location>
        <begin position="15"/>
        <end position="35"/>
    </location>
</feature>
<feature type="topological domain" description="Virion surface" evidence="1">
    <location>
        <begin position="36"/>
        <end position="470"/>
    </location>
</feature>
<feature type="region of interest" description="Involved in apical transport and lipid raft association" evidence="1">
    <location>
        <begin position="11"/>
        <end position="32"/>
    </location>
</feature>
<feature type="region of interest" description="Hypervariable stalk region" evidence="1">
    <location>
        <begin position="32"/>
        <end position="86"/>
    </location>
</feature>
<feature type="region of interest" description="Head of neuraminidase" evidence="1">
    <location>
        <begin position="89"/>
        <end position="470"/>
    </location>
</feature>
<feature type="active site" description="Proton donor/acceptor" evidence="1">
    <location>
        <position position="149"/>
    </location>
</feature>
<feature type="active site" description="Nucleophile" evidence="1">
    <location>
        <position position="402"/>
    </location>
</feature>
<feature type="binding site" evidence="1">
    <location>
        <position position="116"/>
    </location>
    <ligand>
        <name>substrate</name>
    </ligand>
</feature>
<feature type="binding site" evidence="1">
    <location>
        <position position="150"/>
    </location>
    <ligand>
        <name>substrate</name>
    </ligand>
</feature>
<feature type="binding site" evidence="1">
    <location>
        <begin position="275"/>
        <end position="276"/>
    </location>
    <ligand>
        <name>substrate</name>
    </ligand>
</feature>
<feature type="binding site" evidence="1">
    <location>
        <position position="291"/>
    </location>
    <ligand>
        <name>substrate</name>
    </ligand>
</feature>
<feature type="binding site" evidence="1">
    <location>
        <position position="292"/>
    </location>
    <ligand>
        <name>Ca(2+)</name>
        <dbReference type="ChEBI" id="CHEBI:29108"/>
    </ligand>
</feature>
<feature type="binding site" evidence="1">
    <location>
        <position position="296"/>
    </location>
    <ligand>
        <name>Ca(2+)</name>
        <dbReference type="ChEBI" id="CHEBI:29108"/>
    </ligand>
</feature>
<feature type="binding site" evidence="1">
    <location>
        <position position="322"/>
    </location>
    <ligand>
        <name>Ca(2+)</name>
        <dbReference type="ChEBI" id="CHEBI:29108"/>
    </ligand>
</feature>
<feature type="binding site" evidence="1">
    <location>
        <position position="368"/>
    </location>
    <ligand>
        <name>substrate</name>
    </ligand>
</feature>
<feature type="glycosylation site" description="N-linked (GlcNAc...) asparagine; by host" evidence="1">
    <location>
        <position position="39"/>
    </location>
</feature>
<feature type="glycosylation site" description="N-linked (GlcNAc...) asparagine; by host" evidence="1">
    <location>
        <position position="46"/>
    </location>
</feature>
<feature type="glycosylation site" description="N-linked (GlcNAc...) asparagine; by host" evidence="1">
    <location>
        <position position="54"/>
    </location>
</feature>
<feature type="glycosylation site" description="N-linked (GlcNAc...) asparagine; by host" evidence="1">
    <location>
        <position position="84"/>
    </location>
</feature>
<feature type="glycosylation site" description="N-linked (GlcNAc...) asparagine; by host" evidence="1">
    <location>
        <position position="144"/>
    </location>
</feature>
<feature type="glycosylation site" description="N-linked (GlcNAc...) asparagine; by host" evidence="1">
    <location>
        <position position="293"/>
    </location>
</feature>
<feature type="glycosylation site" description="N-linked (GlcNAc...) asparagine; by host" evidence="1">
    <location>
        <position position="398"/>
    </location>
</feature>
<feature type="disulfide bond" evidence="1">
    <location>
        <begin position="90"/>
        <end position="417"/>
    </location>
</feature>
<feature type="disulfide bond" evidence="1">
    <location>
        <begin position="122"/>
        <end position="127"/>
    </location>
</feature>
<feature type="disulfide bond" evidence="1">
    <location>
        <begin position="182"/>
        <end position="229"/>
    </location>
</feature>
<feature type="disulfide bond" evidence="1">
    <location>
        <begin position="231"/>
        <end position="236"/>
    </location>
</feature>
<feature type="disulfide bond" evidence="1">
    <location>
        <begin position="277"/>
        <end position="290"/>
    </location>
</feature>
<feature type="disulfide bond" evidence="1">
    <location>
        <begin position="279"/>
        <end position="288"/>
    </location>
</feature>
<feature type="disulfide bond" evidence="1">
    <location>
        <begin position="316"/>
        <end position="335"/>
    </location>
</feature>
<feature type="disulfide bond" evidence="1">
    <location>
        <begin position="421"/>
        <end position="446"/>
    </location>
</feature>
<accession>Q07580</accession>
<evidence type="ECO:0000255" key="1">
    <source>
        <dbReference type="HAMAP-Rule" id="MF_04071"/>
    </source>
</evidence>
<sequence length="470" mass="52204">MNPNQKIIAIGSASLGILILNVILHVVSIIVTVLVLNNNGTGLYCNGTIIREYNETVRVERITQWYNTNTIEYIERPSNEYYMNNTEPLCEAQGFAPFSKDNGIRIGSRGHVFVIREPFVSCSPLECRTFFLTQGSLLNDKHSNGTVKDRSPYRTFMSVKVGQSPNVYQARFEAVAWSATACHDGKKWMTVGVTGPDAQAVAVVHYGGVPVDIINSWAGDILRTQESSCTCIKGDCYWVMTDGPANRQAKYRIFKAKDGRIIGQTDINFNGGHIEECSCYPNEGKVECVCRDNWTGTNRPILVISPDLSYTVGYLCAGIPTDTPRGEDSQFTGSCTSPLGNQGYGVKGFGFRQGNDVWAGRTISRTSRLGFEIIKIRNGWTQNSKDQIRKQVIVDNLNWSGYSGSFTLPVELTKKGCLVPCFWVEMIRGKPEETTIWTSSSSIVMCGVDHKIASWSWHDGAILPFDIDKM</sequence>